<sequence length="669" mass="75327">MSDAQQITLLVDGEETKVTTGTTGAELFFERRDVVVARVNGELKDLDQELPEGAEVEGVTIESPDGLNVLRHSTAHVMAQAVQQLRPDAKLGIGPYITDGFYFDFDVAEPFTPEDLKTLEKMMQKIINQNQKFVRRVVSEDEAREAMKNEPYKLELLGKKNEAAEAGEGVNVEVGAGDITIYDNVERKEGTTVWCDLCRGPHLPNTKLISNAFALTRSSSAYWLGNQKNQQLQRIYGTAWPTKDALKAYQERIAEAERRDHRKLGSELDLFSFPDELGSGLPVFHPKGGIIRKEMEDYSRQRHVEAGYEFVYTPHITKGHLYEVSGHLDWYKEGMFPAMHVDAELNEDGTVRKPGQDYYLKPMNCPMHNLIFRSRGRSYRELPLRLFEFGSVYRYEKSGVVHGLTRVRGMTQDDAHIYCTREQMKEELTKTLTFVLDLLKDYGLNDFYLELSTKDPEKYVGEDAAWEEATRTLAEVAQESGLELVPDPGGAAFYGPKISVQAKDALGRTWQMSTIQLDFNLPERFELEFQAADGSRQRPVMIHRALFGSVERFMGVLTEHYAGAFPAWLAPVQVVGIPVAETFNEYMFDVVDQLKAAGIRAEVDTSSDRFPKKIRTASKDKIPFVLIAGGDDAEAGAVSFRFRDGSQDNGVPVAEAVKRITEAVRNRTS</sequence>
<name>SYT_PSECP</name>
<organism>
    <name type="scientific">Pseudarthrobacter chlorophenolicus (strain ATCC 700700 / DSM 12829 / CIP 107037 / JCM 12360 / KCTC 9906 / NCIMB 13794 / A6)</name>
    <name type="common">Arthrobacter chlorophenolicus</name>
    <dbReference type="NCBI Taxonomy" id="452863"/>
    <lineage>
        <taxon>Bacteria</taxon>
        <taxon>Bacillati</taxon>
        <taxon>Actinomycetota</taxon>
        <taxon>Actinomycetes</taxon>
        <taxon>Micrococcales</taxon>
        <taxon>Micrococcaceae</taxon>
        <taxon>Pseudarthrobacter</taxon>
    </lineage>
</organism>
<comment type="function">
    <text evidence="1">Catalyzes the attachment of threonine to tRNA(Thr) in a two-step reaction: L-threonine is first activated by ATP to form Thr-AMP and then transferred to the acceptor end of tRNA(Thr). Also edits incorrectly charged L-seryl-tRNA(Thr).</text>
</comment>
<comment type="catalytic activity">
    <reaction evidence="1">
        <text>tRNA(Thr) + L-threonine + ATP = L-threonyl-tRNA(Thr) + AMP + diphosphate + H(+)</text>
        <dbReference type="Rhea" id="RHEA:24624"/>
        <dbReference type="Rhea" id="RHEA-COMP:9670"/>
        <dbReference type="Rhea" id="RHEA-COMP:9704"/>
        <dbReference type="ChEBI" id="CHEBI:15378"/>
        <dbReference type="ChEBI" id="CHEBI:30616"/>
        <dbReference type="ChEBI" id="CHEBI:33019"/>
        <dbReference type="ChEBI" id="CHEBI:57926"/>
        <dbReference type="ChEBI" id="CHEBI:78442"/>
        <dbReference type="ChEBI" id="CHEBI:78534"/>
        <dbReference type="ChEBI" id="CHEBI:456215"/>
        <dbReference type="EC" id="6.1.1.3"/>
    </reaction>
</comment>
<comment type="cofactor">
    <cofactor evidence="1">
        <name>Zn(2+)</name>
        <dbReference type="ChEBI" id="CHEBI:29105"/>
    </cofactor>
    <text evidence="1">Binds 1 zinc ion per subunit.</text>
</comment>
<comment type="subunit">
    <text evidence="1">Homodimer.</text>
</comment>
<comment type="subcellular location">
    <subcellularLocation>
        <location evidence="1">Cytoplasm</location>
    </subcellularLocation>
</comment>
<comment type="similarity">
    <text evidence="1">Belongs to the class-II aminoacyl-tRNA synthetase family.</text>
</comment>
<protein>
    <recommendedName>
        <fullName evidence="1">Threonine--tRNA ligase</fullName>
        <ecNumber evidence="1">6.1.1.3</ecNumber>
    </recommendedName>
    <alternativeName>
        <fullName evidence="1">Threonyl-tRNA synthetase</fullName>
        <shortName evidence="1">ThrRS</shortName>
    </alternativeName>
</protein>
<accession>B8H9E8</accession>
<reference key="1">
    <citation type="submission" date="2009-01" db="EMBL/GenBank/DDBJ databases">
        <title>Complete sequence of chromosome of Arthrobacter chlorophenolicus A6.</title>
        <authorList>
            <consortium name="US DOE Joint Genome Institute"/>
            <person name="Lucas S."/>
            <person name="Copeland A."/>
            <person name="Lapidus A."/>
            <person name="Glavina del Rio T."/>
            <person name="Tice H."/>
            <person name="Bruce D."/>
            <person name="Goodwin L."/>
            <person name="Pitluck S."/>
            <person name="Goltsman E."/>
            <person name="Clum A."/>
            <person name="Larimer F."/>
            <person name="Land M."/>
            <person name="Hauser L."/>
            <person name="Kyrpides N."/>
            <person name="Mikhailova N."/>
            <person name="Jansson J."/>
            <person name="Richardson P."/>
        </authorList>
    </citation>
    <scope>NUCLEOTIDE SEQUENCE [LARGE SCALE GENOMIC DNA]</scope>
    <source>
        <strain>ATCC 700700 / DSM 12829 / CIP 107037 / JCM 12360 / KCTC 9906 / NCIMB 13794 / A6</strain>
    </source>
</reference>
<keyword id="KW-0030">Aminoacyl-tRNA synthetase</keyword>
<keyword id="KW-0067">ATP-binding</keyword>
<keyword id="KW-0963">Cytoplasm</keyword>
<keyword id="KW-0436">Ligase</keyword>
<keyword id="KW-0479">Metal-binding</keyword>
<keyword id="KW-0547">Nucleotide-binding</keyword>
<keyword id="KW-0648">Protein biosynthesis</keyword>
<keyword id="KW-0694">RNA-binding</keyword>
<keyword id="KW-0820">tRNA-binding</keyword>
<keyword id="KW-0862">Zinc</keyword>
<dbReference type="EC" id="6.1.1.3" evidence="1"/>
<dbReference type="EMBL" id="CP001341">
    <property type="protein sequence ID" value="ACL40017.1"/>
    <property type="molecule type" value="Genomic_DNA"/>
</dbReference>
<dbReference type="RefSeq" id="WP_015937235.1">
    <property type="nucleotide sequence ID" value="NC_011886.1"/>
</dbReference>
<dbReference type="SMR" id="B8H9E8"/>
<dbReference type="STRING" id="452863.Achl_2043"/>
<dbReference type="KEGG" id="ach:Achl_2043"/>
<dbReference type="eggNOG" id="COG0441">
    <property type="taxonomic scope" value="Bacteria"/>
</dbReference>
<dbReference type="HOGENOM" id="CLU_008554_0_1_11"/>
<dbReference type="OrthoDB" id="9802304at2"/>
<dbReference type="Proteomes" id="UP000002505">
    <property type="component" value="Chromosome"/>
</dbReference>
<dbReference type="GO" id="GO:0005737">
    <property type="term" value="C:cytoplasm"/>
    <property type="evidence" value="ECO:0007669"/>
    <property type="project" value="UniProtKB-SubCell"/>
</dbReference>
<dbReference type="GO" id="GO:0005524">
    <property type="term" value="F:ATP binding"/>
    <property type="evidence" value="ECO:0007669"/>
    <property type="project" value="UniProtKB-UniRule"/>
</dbReference>
<dbReference type="GO" id="GO:0046872">
    <property type="term" value="F:metal ion binding"/>
    <property type="evidence" value="ECO:0007669"/>
    <property type="project" value="UniProtKB-KW"/>
</dbReference>
<dbReference type="GO" id="GO:0004829">
    <property type="term" value="F:threonine-tRNA ligase activity"/>
    <property type="evidence" value="ECO:0007669"/>
    <property type="project" value="UniProtKB-UniRule"/>
</dbReference>
<dbReference type="GO" id="GO:0000049">
    <property type="term" value="F:tRNA binding"/>
    <property type="evidence" value="ECO:0007669"/>
    <property type="project" value="UniProtKB-KW"/>
</dbReference>
<dbReference type="GO" id="GO:0006435">
    <property type="term" value="P:threonyl-tRNA aminoacylation"/>
    <property type="evidence" value="ECO:0007669"/>
    <property type="project" value="UniProtKB-UniRule"/>
</dbReference>
<dbReference type="CDD" id="cd01667">
    <property type="entry name" value="TGS_ThrRS"/>
    <property type="match status" value="1"/>
</dbReference>
<dbReference type="CDD" id="cd00860">
    <property type="entry name" value="ThrRS_anticodon"/>
    <property type="match status" value="1"/>
</dbReference>
<dbReference type="CDD" id="cd00771">
    <property type="entry name" value="ThrRS_core"/>
    <property type="match status" value="1"/>
</dbReference>
<dbReference type="FunFam" id="3.30.54.20:FF:000003">
    <property type="entry name" value="Threonine--tRNA ligase"/>
    <property type="match status" value="1"/>
</dbReference>
<dbReference type="FunFam" id="3.30.930.10:FF:000019">
    <property type="entry name" value="Threonine--tRNA ligase"/>
    <property type="match status" value="1"/>
</dbReference>
<dbReference type="FunFam" id="3.40.50.800:FF:000001">
    <property type="entry name" value="Threonine--tRNA ligase"/>
    <property type="match status" value="1"/>
</dbReference>
<dbReference type="FunFam" id="3.30.980.10:FF:000005">
    <property type="entry name" value="Threonyl-tRNA synthetase, mitochondrial"/>
    <property type="match status" value="1"/>
</dbReference>
<dbReference type="Gene3D" id="3.30.54.20">
    <property type="match status" value="1"/>
</dbReference>
<dbReference type="Gene3D" id="3.40.50.800">
    <property type="entry name" value="Anticodon-binding domain"/>
    <property type="match status" value="1"/>
</dbReference>
<dbReference type="Gene3D" id="3.30.930.10">
    <property type="entry name" value="Bira Bifunctional Protein, Domain 2"/>
    <property type="match status" value="1"/>
</dbReference>
<dbReference type="Gene3D" id="3.30.980.10">
    <property type="entry name" value="Threonyl-trna Synthetase, Chain A, domain 2"/>
    <property type="match status" value="1"/>
</dbReference>
<dbReference type="HAMAP" id="MF_00184">
    <property type="entry name" value="Thr_tRNA_synth"/>
    <property type="match status" value="1"/>
</dbReference>
<dbReference type="InterPro" id="IPR002314">
    <property type="entry name" value="aa-tRNA-synt_IIb"/>
</dbReference>
<dbReference type="InterPro" id="IPR006195">
    <property type="entry name" value="aa-tRNA-synth_II"/>
</dbReference>
<dbReference type="InterPro" id="IPR045864">
    <property type="entry name" value="aa-tRNA-synth_II/BPL/LPL"/>
</dbReference>
<dbReference type="InterPro" id="IPR004154">
    <property type="entry name" value="Anticodon-bd"/>
</dbReference>
<dbReference type="InterPro" id="IPR036621">
    <property type="entry name" value="Anticodon-bd_dom_sf"/>
</dbReference>
<dbReference type="InterPro" id="IPR004095">
    <property type="entry name" value="TGS"/>
</dbReference>
<dbReference type="InterPro" id="IPR002320">
    <property type="entry name" value="Thr-tRNA-ligase_IIa"/>
</dbReference>
<dbReference type="InterPro" id="IPR018163">
    <property type="entry name" value="Thr/Ala-tRNA-synth_IIc_edit"/>
</dbReference>
<dbReference type="InterPro" id="IPR047246">
    <property type="entry name" value="ThrRS_anticodon"/>
</dbReference>
<dbReference type="InterPro" id="IPR033728">
    <property type="entry name" value="ThrRS_core"/>
</dbReference>
<dbReference type="InterPro" id="IPR012947">
    <property type="entry name" value="tRNA_SAD"/>
</dbReference>
<dbReference type="NCBIfam" id="TIGR00418">
    <property type="entry name" value="thrS"/>
    <property type="match status" value="1"/>
</dbReference>
<dbReference type="PANTHER" id="PTHR11451:SF44">
    <property type="entry name" value="THREONINE--TRNA LIGASE, CHLOROPLASTIC_MITOCHONDRIAL 2"/>
    <property type="match status" value="1"/>
</dbReference>
<dbReference type="PANTHER" id="PTHR11451">
    <property type="entry name" value="THREONINE-TRNA LIGASE"/>
    <property type="match status" value="1"/>
</dbReference>
<dbReference type="Pfam" id="PF03129">
    <property type="entry name" value="HGTP_anticodon"/>
    <property type="match status" value="1"/>
</dbReference>
<dbReference type="Pfam" id="PF00587">
    <property type="entry name" value="tRNA-synt_2b"/>
    <property type="match status" value="1"/>
</dbReference>
<dbReference type="Pfam" id="PF07973">
    <property type="entry name" value="tRNA_SAD"/>
    <property type="match status" value="1"/>
</dbReference>
<dbReference type="PRINTS" id="PR01047">
    <property type="entry name" value="TRNASYNTHTHR"/>
</dbReference>
<dbReference type="SMART" id="SM00863">
    <property type="entry name" value="tRNA_SAD"/>
    <property type="match status" value="1"/>
</dbReference>
<dbReference type="SUPFAM" id="SSF52954">
    <property type="entry name" value="Class II aaRS ABD-related"/>
    <property type="match status" value="1"/>
</dbReference>
<dbReference type="SUPFAM" id="SSF55681">
    <property type="entry name" value="Class II aaRS and biotin synthetases"/>
    <property type="match status" value="1"/>
</dbReference>
<dbReference type="SUPFAM" id="SSF55186">
    <property type="entry name" value="ThrRS/AlaRS common domain"/>
    <property type="match status" value="1"/>
</dbReference>
<dbReference type="PROSITE" id="PS50862">
    <property type="entry name" value="AA_TRNA_LIGASE_II"/>
    <property type="match status" value="1"/>
</dbReference>
<dbReference type="PROSITE" id="PS51880">
    <property type="entry name" value="TGS"/>
    <property type="match status" value="1"/>
</dbReference>
<feature type="chain" id="PRO_1000199527" description="Threonine--tRNA ligase">
    <location>
        <begin position="1"/>
        <end position="669"/>
    </location>
</feature>
<feature type="domain" description="TGS" evidence="2">
    <location>
        <begin position="3"/>
        <end position="60"/>
    </location>
</feature>
<feature type="region of interest" description="Catalytic" evidence="1">
    <location>
        <begin position="260"/>
        <end position="566"/>
    </location>
</feature>
<feature type="binding site" evidence="1">
    <location>
        <position position="365"/>
    </location>
    <ligand>
        <name>Zn(2+)</name>
        <dbReference type="ChEBI" id="CHEBI:29105"/>
    </ligand>
</feature>
<feature type="binding site" evidence="1">
    <location>
        <position position="416"/>
    </location>
    <ligand>
        <name>Zn(2+)</name>
        <dbReference type="ChEBI" id="CHEBI:29105"/>
    </ligand>
</feature>
<feature type="binding site" evidence="1">
    <location>
        <position position="543"/>
    </location>
    <ligand>
        <name>Zn(2+)</name>
        <dbReference type="ChEBI" id="CHEBI:29105"/>
    </ligand>
</feature>
<proteinExistence type="inferred from homology"/>
<gene>
    <name evidence="1" type="primary">thrS</name>
    <name type="ordered locus">Achl_2043</name>
</gene>
<evidence type="ECO:0000255" key="1">
    <source>
        <dbReference type="HAMAP-Rule" id="MF_00184"/>
    </source>
</evidence>
<evidence type="ECO:0000255" key="2">
    <source>
        <dbReference type="PROSITE-ProRule" id="PRU01228"/>
    </source>
</evidence>